<name>DNAA_BORBZ</name>
<accession>B7J203</accession>
<organism>
    <name type="scientific">Borreliella burgdorferi (strain ZS7)</name>
    <name type="common">Borrelia burgdorferi</name>
    <dbReference type="NCBI Taxonomy" id="445985"/>
    <lineage>
        <taxon>Bacteria</taxon>
        <taxon>Pseudomonadati</taxon>
        <taxon>Spirochaetota</taxon>
        <taxon>Spirochaetia</taxon>
        <taxon>Spirochaetales</taxon>
        <taxon>Borreliaceae</taxon>
        <taxon>Borreliella</taxon>
    </lineage>
</organism>
<proteinExistence type="inferred from homology"/>
<evidence type="ECO:0000255" key="1">
    <source>
        <dbReference type="HAMAP-Rule" id="MF_00377"/>
    </source>
</evidence>
<feature type="chain" id="PRO_1000121950" description="Chromosomal replication initiator protein DnaA">
    <location>
        <begin position="1"/>
        <end position="487"/>
    </location>
</feature>
<feature type="region of interest" description="Domain I, interacts with DnaA modulators" evidence="1">
    <location>
        <begin position="1"/>
        <end position="79"/>
    </location>
</feature>
<feature type="region of interest" description="Domain II" evidence="1">
    <location>
        <begin position="79"/>
        <end position="142"/>
    </location>
</feature>
<feature type="region of interest" description="Domain III, AAA+ region" evidence="1">
    <location>
        <begin position="143"/>
        <end position="359"/>
    </location>
</feature>
<feature type="region of interest" description="Domain IV, binds dsDNA" evidence="1">
    <location>
        <begin position="360"/>
        <end position="487"/>
    </location>
</feature>
<feature type="binding site" evidence="1">
    <location>
        <position position="187"/>
    </location>
    <ligand>
        <name>ATP</name>
        <dbReference type="ChEBI" id="CHEBI:30616"/>
    </ligand>
</feature>
<feature type="binding site" evidence="1">
    <location>
        <position position="189"/>
    </location>
    <ligand>
        <name>ATP</name>
        <dbReference type="ChEBI" id="CHEBI:30616"/>
    </ligand>
</feature>
<feature type="binding site" evidence="1">
    <location>
        <position position="190"/>
    </location>
    <ligand>
        <name>ATP</name>
        <dbReference type="ChEBI" id="CHEBI:30616"/>
    </ligand>
</feature>
<feature type="binding site" evidence="1">
    <location>
        <position position="191"/>
    </location>
    <ligand>
        <name>ATP</name>
        <dbReference type="ChEBI" id="CHEBI:30616"/>
    </ligand>
</feature>
<gene>
    <name evidence="1" type="primary">dnaA</name>
    <name type="ordered locus">BbuZS7_0443</name>
</gene>
<reference key="1">
    <citation type="journal article" date="2011" name="J. Bacteriol.">
        <title>Whole-genome sequences of thirteen isolates of Borrelia burgdorferi.</title>
        <authorList>
            <person name="Schutzer S.E."/>
            <person name="Fraser-Liggett C.M."/>
            <person name="Casjens S.R."/>
            <person name="Qiu W.G."/>
            <person name="Dunn J.J."/>
            <person name="Mongodin E.F."/>
            <person name="Luft B.J."/>
        </authorList>
    </citation>
    <scope>NUCLEOTIDE SEQUENCE [LARGE SCALE GENOMIC DNA]</scope>
    <source>
        <strain>ZS7</strain>
    </source>
</reference>
<dbReference type="EMBL" id="CP001205">
    <property type="protein sequence ID" value="ACK75027.1"/>
    <property type="molecule type" value="Genomic_DNA"/>
</dbReference>
<dbReference type="RefSeq" id="WP_002657909.1">
    <property type="nucleotide sequence ID" value="NC_011728.1"/>
</dbReference>
<dbReference type="SMR" id="B7J203"/>
<dbReference type="GeneID" id="56567868"/>
<dbReference type="KEGG" id="bbz:BbuZS7_0443"/>
<dbReference type="HOGENOM" id="CLU_026910_3_1_12"/>
<dbReference type="Proteomes" id="UP000006901">
    <property type="component" value="Chromosome"/>
</dbReference>
<dbReference type="GO" id="GO:0005737">
    <property type="term" value="C:cytoplasm"/>
    <property type="evidence" value="ECO:0007669"/>
    <property type="project" value="UniProtKB-SubCell"/>
</dbReference>
<dbReference type="GO" id="GO:0005886">
    <property type="term" value="C:plasma membrane"/>
    <property type="evidence" value="ECO:0007669"/>
    <property type="project" value="TreeGrafter"/>
</dbReference>
<dbReference type="GO" id="GO:0005524">
    <property type="term" value="F:ATP binding"/>
    <property type="evidence" value="ECO:0007669"/>
    <property type="project" value="UniProtKB-UniRule"/>
</dbReference>
<dbReference type="GO" id="GO:0016887">
    <property type="term" value="F:ATP hydrolysis activity"/>
    <property type="evidence" value="ECO:0007669"/>
    <property type="project" value="InterPro"/>
</dbReference>
<dbReference type="GO" id="GO:0003688">
    <property type="term" value="F:DNA replication origin binding"/>
    <property type="evidence" value="ECO:0007669"/>
    <property type="project" value="UniProtKB-UniRule"/>
</dbReference>
<dbReference type="GO" id="GO:0008289">
    <property type="term" value="F:lipid binding"/>
    <property type="evidence" value="ECO:0007669"/>
    <property type="project" value="UniProtKB-KW"/>
</dbReference>
<dbReference type="GO" id="GO:0006270">
    <property type="term" value="P:DNA replication initiation"/>
    <property type="evidence" value="ECO:0007669"/>
    <property type="project" value="UniProtKB-UniRule"/>
</dbReference>
<dbReference type="GO" id="GO:0006275">
    <property type="term" value="P:regulation of DNA replication"/>
    <property type="evidence" value="ECO:0007669"/>
    <property type="project" value="UniProtKB-UniRule"/>
</dbReference>
<dbReference type="CDD" id="cd00009">
    <property type="entry name" value="AAA"/>
    <property type="match status" value="1"/>
</dbReference>
<dbReference type="CDD" id="cd06571">
    <property type="entry name" value="Bac_DnaA_C"/>
    <property type="match status" value="1"/>
</dbReference>
<dbReference type="FunFam" id="3.40.50.300:FF:000668">
    <property type="entry name" value="Chromosomal replication initiator protein DnaA"/>
    <property type="match status" value="1"/>
</dbReference>
<dbReference type="Gene3D" id="1.10.1750.10">
    <property type="match status" value="1"/>
</dbReference>
<dbReference type="Gene3D" id="1.10.8.60">
    <property type="match status" value="1"/>
</dbReference>
<dbReference type="Gene3D" id="3.30.300.180">
    <property type="match status" value="1"/>
</dbReference>
<dbReference type="Gene3D" id="3.40.50.300">
    <property type="entry name" value="P-loop containing nucleotide triphosphate hydrolases"/>
    <property type="match status" value="1"/>
</dbReference>
<dbReference type="HAMAP" id="MF_00377">
    <property type="entry name" value="DnaA_bact"/>
    <property type="match status" value="1"/>
</dbReference>
<dbReference type="InterPro" id="IPR003593">
    <property type="entry name" value="AAA+_ATPase"/>
</dbReference>
<dbReference type="InterPro" id="IPR001957">
    <property type="entry name" value="Chromosome_initiator_DnaA"/>
</dbReference>
<dbReference type="InterPro" id="IPR020591">
    <property type="entry name" value="Chromosome_initiator_DnaA-like"/>
</dbReference>
<dbReference type="InterPro" id="IPR018312">
    <property type="entry name" value="Chromosome_initiator_DnaA_CS"/>
</dbReference>
<dbReference type="InterPro" id="IPR013159">
    <property type="entry name" value="DnaA_C"/>
</dbReference>
<dbReference type="InterPro" id="IPR013317">
    <property type="entry name" value="DnaA_dom"/>
</dbReference>
<dbReference type="InterPro" id="IPR024633">
    <property type="entry name" value="DnaA_N_dom"/>
</dbReference>
<dbReference type="InterPro" id="IPR038454">
    <property type="entry name" value="DnaA_N_sf"/>
</dbReference>
<dbReference type="InterPro" id="IPR027417">
    <property type="entry name" value="P-loop_NTPase"/>
</dbReference>
<dbReference type="InterPro" id="IPR010921">
    <property type="entry name" value="Trp_repressor/repl_initiator"/>
</dbReference>
<dbReference type="NCBIfam" id="TIGR00362">
    <property type="entry name" value="DnaA"/>
    <property type="match status" value="1"/>
</dbReference>
<dbReference type="PANTHER" id="PTHR30050">
    <property type="entry name" value="CHROMOSOMAL REPLICATION INITIATOR PROTEIN DNAA"/>
    <property type="match status" value="1"/>
</dbReference>
<dbReference type="PANTHER" id="PTHR30050:SF2">
    <property type="entry name" value="CHROMOSOMAL REPLICATION INITIATOR PROTEIN DNAA"/>
    <property type="match status" value="1"/>
</dbReference>
<dbReference type="Pfam" id="PF00308">
    <property type="entry name" value="Bac_DnaA"/>
    <property type="match status" value="1"/>
</dbReference>
<dbReference type="Pfam" id="PF08299">
    <property type="entry name" value="Bac_DnaA_C"/>
    <property type="match status" value="1"/>
</dbReference>
<dbReference type="Pfam" id="PF11638">
    <property type="entry name" value="DnaA_N"/>
    <property type="match status" value="1"/>
</dbReference>
<dbReference type="PRINTS" id="PR00051">
    <property type="entry name" value="DNAA"/>
</dbReference>
<dbReference type="SMART" id="SM00382">
    <property type="entry name" value="AAA"/>
    <property type="match status" value="1"/>
</dbReference>
<dbReference type="SMART" id="SM00760">
    <property type="entry name" value="Bac_DnaA_C"/>
    <property type="match status" value="1"/>
</dbReference>
<dbReference type="SUPFAM" id="SSF52540">
    <property type="entry name" value="P-loop containing nucleoside triphosphate hydrolases"/>
    <property type="match status" value="1"/>
</dbReference>
<dbReference type="SUPFAM" id="SSF48295">
    <property type="entry name" value="TrpR-like"/>
    <property type="match status" value="1"/>
</dbReference>
<dbReference type="PROSITE" id="PS01008">
    <property type="entry name" value="DNAA"/>
    <property type="match status" value="1"/>
</dbReference>
<protein>
    <recommendedName>
        <fullName evidence="1">Chromosomal replication initiator protein DnaA</fullName>
    </recommendedName>
</protein>
<sequence>MEKSKNIWSLILTEIKKELSEEEFYVWFENLCFLESIGDNIKISTPNLFHKNQIEKRFTKKIKEILIKNGYNNIVIVFTNQPPKTHSNKQETKNPALNETFSKFDKLKEKTTSKEAIQNIQDRIKMYIKKEEEEEPTNFKNPFLKKRYTFENFIIGPNNKLAYNASLSISKNPGKKYNPCLIYGGVGLGKTHLLQSIGNKTEELHHNLKILYVTAENFLNEFVESIKTHETKKFKKKYRYLDMLLIDDIHDLQKKEGIQEELFHTFNALYEDNKQLVFTCDRSPSELTNFTDRLKSRFTRGLNVDISKPNFELRAAIVEKKAEEDGINVPKNILNLVAQKVTTNVRDLEAAVTKLKAYIDLDNIEIDIEIVEKIIKEIIIYEKETTNEPNNKINIENIKKILLRELKITHKDIEGHSKKPEITKARHIYAYLLRNFTELSTVEIGKIIGGKTHSTVLYSINKIDRDRNNDKEINNLITELMNKIKKN</sequence>
<keyword id="KW-0067">ATP-binding</keyword>
<keyword id="KW-0963">Cytoplasm</keyword>
<keyword id="KW-0235">DNA replication</keyword>
<keyword id="KW-0238">DNA-binding</keyword>
<keyword id="KW-0446">Lipid-binding</keyword>
<keyword id="KW-0547">Nucleotide-binding</keyword>
<comment type="function">
    <text evidence="1">Plays an essential role in the initiation and regulation of chromosomal replication. ATP-DnaA binds to the origin of replication (oriC) to initiate formation of the DNA replication initiation complex once per cell cycle. Binds the DnaA box (a 9 base pair repeat at the origin) and separates the double-stranded (ds)DNA. Forms a right-handed helical filament on oriC DNA; dsDNA binds to the exterior of the filament while single-stranded (ss)DNA is stabiized in the filament's interior. The ATP-DnaA-oriC complex binds and stabilizes one strand of the AT-rich DNA unwinding element (DUE), permitting loading of DNA polymerase. After initiation quickly degrades to an ADP-DnaA complex that is not apt for DNA replication. Binds acidic phospholipids.</text>
</comment>
<comment type="subunit">
    <text evidence="1">Oligomerizes as a right-handed, spiral filament on DNA at oriC.</text>
</comment>
<comment type="subcellular location">
    <subcellularLocation>
        <location evidence="1">Cytoplasm</location>
    </subcellularLocation>
</comment>
<comment type="domain">
    <text evidence="1">Domain I is involved in oligomerization and binding regulators, domain II is flexibile and of varying length in different bacteria, domain III forms the AAA+ region, while domain IV binds dsDNA.</text>
</comment>
<comment type="similarity">
    <text evidence="1">Belongs to the DnaA family.</text>
</comment>